<protein>
    <recommendedName>
        <fullName>Cyclic nucleotide-gated ion channel 1</fullName>
        <shortName>AtCNGC1</shortName>
    </recommendedName>
    <alternativeName>
        <fullName>Cyclic nucleotide- and calmodulin-regulated ion channel 1</fullName>
    </alternativeName>
</protein>
<organism>
    <name type="scientific">Arabidopsis thaliana</name>
    <name type="common">Mouse-ear cress</name>
    <dbReference type="NCBI Taxonomy" id="3702"/>
    <lineage>
        <taxon>Eukaryota</taxon>
        <taxon>Viridiplantae</taxon>
        <taxon>Streptophyta</taxon>
        <taxon>Embryophyta</taxon>
        <taxon>Tracheophyta</taxon>
        <taxon>Spermatophyta</taxon>
        <taxon>Magnoliopsida</taxon>
        <taxon>eudicotyledons</taxon>
        <taxon>Gunneridae</taxon>
        <taxon>Pentapetalae</taxon>
        <taxon>rosids</taxon>
        <taxon>malvids</taxon>
        <taxon>Brassicales</taxon>
        <taxon>Brassicaceae</taxon>
        <taxon>Camelineae</taxon>
        <taxon>Arabidopsis</taxon>
    </lineage>
</organism>
<feature type="chain" id="PRO_0000219329" description="Cyclic nucleotide-gated ion channel 1">
    <location>
        <begin position="1"/>
        <end position="716"/>
    </location>
</feature>
<feature type="topological domain" description="Cytoplasmic" evidence="2">
    <location>
        <begin position="1"/>
        <end position="97"/>
    </location>
</feature>
<feature type="transmembrane region" description="Helical; Name=H1" evidence="2">
    <location>
        <begin position="98"/>
        <end position="118"/>
    </location>
</feature>
<feature type="topological domain" description="Extracellular" evidence="2">
    <location>
        <begin position="119"/>
        <end position="132"/>
    </location>
</feature>
<feature type="transmembrane region" description="Helical; Name=H2" evidence="2">
    <location>
        <begin position="133"/>
        <end position="153"/>
    </location>
</feature>
<feature type="topological domain" description="Cytoplasmic" evidence="2">
    <location>
        <begin position="154"/>
        <end position="187"/>
    </location>
</feature>
<feature type="transmembrane region" description="Helical; Name=H3" evidence="2">
    <location>
        <begin position="188"/>
        <end position="208"/>
    </location>
</feature>
<feature type="topological domain" description="Extracellular" evidence="2">
    <location>
        <begin position="209"/>
        <end position="220"/>
    </location>
</feature>
<feature type="transmembrane region" description="Helical; Name=H4" evidence="2">
    <location>
        <begin position="221"/>
        <end position="241"/>
    </location>
</feature>
<feature type="topological domain" description="Cytoplasmic" evidence="2">
    <location>
        <begin position="242"/>
        <end position="259"/>
    </location>
</feature>
<feature type="transmembrane region" description="Helical; Name=H5" evidence="2">
    <location>
        <begin position="260"/>
        <end position="280"/>
    </location>
</feature>
<feature type="topological domain" description="Extracellular" evidence="2">
    <location>
        <begin position="281"/>
        <end position="379"/>
    </location>
</feature>
<feature type="transmembrane region" description="Helical; Name=H6" evidence="2">
    <location>
        <begin position="380"/>
        <end position="400"/>
    </location>
</feature>
<feature type="topological domain" description="Cytoplasmic" evidence="2">
    <location>
        <begin position="401"/>
        <end position="716"/>
    </location>
</feature>
<feature type="domain" description="IQ">
    <location>
        <begin position="622"/>
        <end position="651"/>
    </location>
</feature>
<feature type="region of interest" description="Calmodulin-binding">
    <location>
        <begin position="602"/>
        <end position="617"/>
    </location>
</feature>
<feature type="region of interest" description="Disordered" evidence="3">
    <location>
        <begin position="689"/>
        <end position="716"/>
    </location>
</feature>
<feature type="binding site">
    <location>
        <begin position="486"/>
        <end position="610"/>
    </location>
    <ligand>
        <name>a nucleoside 3',5'-cyclic phosphate</name>
        <dbReference type="ChEBI" id="CHEBI:58464"/>
    </ligand>
</feature>
<feature type="binding site" evidence="1">
    <location>
        <position position="557"/>
    </location>
    <ligand>
        <name>a nucleoside 3',5'-cyclic phosphate</name>
        <dbReference type="ChEBI" id="CHEBI:58464"/>
    </ligand>
</feature>
<reference key="1">
    <citation type="online journal article" date="1998" name="Plant Gene Register">
        <title>Cloning and partial characterization of two putative cyclic nucleotide-regulated ion channels from Arabidopsis thaliana, designated CNGC1 and CNGC2.</title>
        <authorList>
            <person name="Koehler C."/>
            <person name="Neuhaus G."/>
        </authorList>
        <locator>PGR98-062</locator>
    </citation>
    <scope>NUCLEOTIDE SEQUENCE [MRNA]</scope>
    <scope>CHARACTERIZATION</scope>
    <source>
        <strain>cv. Columbia</strain>
    </source>
</reference>
<reference key="2">
    <citation type="submission" date="1999-04" db="EMBL/GenBank/DDBJ databases">
        <title>Structural analysis of Arabidopsis thaliana chromosome 5. XI.</title>
        <authorList>
            <person name="Kaneko T."/>
            <person name="Katoh T."/>
            <person name="Asamizu E."/>
            <person name="Sato S."/>
            <person name="Nakamura Y."/>
            <person name="Kotani H."/>
            <person name="Tabata S."/>
        </authorList>
    </citation>
    <scope>NUCLEOTIDE SEQUENCE [LARGE SCALE GENOMIC DNA]</scope>
    <source>
        <strain>cv. Columbia</strain>
    </source>
</reference>
<reference key="3">
    <citation type="journal article" date="2017" name="Plant J.">
        <title>Araport11: a complete reannotation of the Arabidopsis thaliana reference genome.</title>
        <authorList>
            <person name="Cheng C.Y."/>
            <person name="Krishnakumar V."/>
            <person name="Chan A.P."/>
            <person name="Thibaud-Nissen F."/>
            <person name="Schobel S."/>
            <person name="Town C.D."/>
        </authorList>
    </citation>
    <scope>GENOME REANNOTATION</scope>
    <source>
        <strain>cv. Columbia</strain>
    </source>
</reference>
<reference key="4">
    <citation type="journal article" date="2003" name="Science">
        <title>Empirical analysis of transcriptional activity in the Arabidopsis genome.</title>
        <authorList>
            <person name="Yamada K."/>
            <person name="Lim J."/>
            <person name="Dale J.M."/>
            <person name="Chen H."/>
            <person name="Shinn P."/>
            <person name="Palm C.J."/>
            <person name="Southwick A.M."/>
            <person name="Wu H.C."/>
            <person name="Kim C.J."/>
            <person name="Nguyen M."/>
            <person name="Pham P.K."/>
            <person name="Cheuk R.F."/>
            <person name="Karlin-Newmann G."/>
            <person name="Liu S.X."/>
            <person name="Lam B."/>
            <person name="Sakano H."/>
            <person name="Wu T."/>
            <person name="Yu G."/>
            <person name="Miranda M."/>
            <person name="Quach H.L."/>
            <person name="Tripp M."/>
            <person name="Chang C.H."/>
            <person name="Lee J.M."/>
            <person name="Toriumi M.J."/>
            <person name="Chan M.M."/>
            <person name="Tang C.C."/>
            <person name="Onodera C.S."/>
            <person name="Deng J.M."/>
            <person name="Akiyama K."/>
            <person name="Ansari Y."/>
            <person name="Arakawa T."/>
            <person name="Banh J."/>
            <person name="Banno F."/>
            <person name="Bowser L."/>
            <person name="Brooks S.Y."/>
            <person name="Carninci P."/>
            <person name="Chao Q."/>
            <person name="Choy N."/>
            <person name="Enju A."/>
            <person name="Goldsmith A.D."/>
            <person name="Gurjal M."/>
            <person name="Hansen N.F."/>
            <person name="Hayashizaki Y."/>
            <person name="Johnson-Hopson C."/>
            <person name="Hsuan V.W."/>
            <person name="Iida K."/>
            <person name="Karnes M."/>
            <person name="Khan S."/>
            <person name="Koesema E."/>
            <person name="Ishida J."/>
            <person name="Jiang P.X."/>
            <person name="Jones T."/>
            <person name="Kawai J."/>
            <person name="Kamiya A."/>
            <person name="Meyers C."/>
            <person name="Nakajima M."/>
            <person name="Narusaka M."/>
            <person name="Seki M."/>
            <person name="Sakurai T."/>
            <person name="Satou M."/>
            <person name="Tamse R."/>
            <person name="Vaysberg M."/>
            <person name="Wallender E.K."/>
            <person name="Wong C."/>
            <person name="Yamamura Y."/>
            <person name="Yuan S."/>
            <person name="Shinozaki K."/>
            <person name="Davis R.W."/>
            <person name="Theologis A."/>
            <person name="Ecker J.R."/>
        </authorList>
    </citation>
    <scope>NUCLEOTIDE SEQUENCE [LARGE SCALE MRNA]</scope>
    <source>
        <strain>cv. Columbia</strain>
    </source>
</reference>
<reference key="5">
    <citation type="journal article" date="1999" name="Plant J.">
        <title>Characterisation of a novel gene family of putative cyclic nucleotide- and calmodulin-regulated ion channels in Arabidopsis thaliana.</title>
        <authorList>
            <person name="Koehler C."/>
            <person name="Merkle T."/>
            <person name="Neuhaus G."/>
        </authorList>
    </citation>
    <scope>INTERACTION WITH CALMODULIN</scope>
</reference>
<reference key="6">
    <citation type="journal article" date="2000" name="FEBS Lett.">
        <title>Characterisation of calmodulin binding to cyclic nucleotide-gated ion channels from Arabidopsis thaliana.</title>
        <authorList>
            <person name="Koehler C."/>
            <person name="Neuhaus G."/>
        </authorList>
    </citation>
    <scope>CALMODULIN-BINDING DOMAIN</scope>
</reference>
<reference key="7">
    <citation type="journal article" date="2000" name="Plant J.">
        <title>Expression of a truncated tobacco NtCBP4 channel in transgenic plants and disruption of the homologous Arabidopsis CNGC1 gene confer Pb2+ tolerance.</title>
        <authorList>
            <person name="Sunkar R."/>
            <person name="Kaplan B."/>
            <person name="Bouche N."/>
            <person name="Arazi T."/>
            <person name="Dolev D."/>
            <person name="Talke I.N."/>
            <person name="Maathuis F.J.M."/>
            <person name="Sanders D."/>
            <person name="Bouchez D."/>
            <person name="Fromm H."/>
        </authorList>
    </citation>
    <scope>FUNCTION</scope>
    <scope>DISRUPTION PHENOTYPE</scope>
</reference>
<reference key="8">
    <citation type="journal article" date="2001" name="Plant Physiol.">
        <title>Phylogenetic relationships within cation transporter families of Arabidopsis.</title>
        <authorList>
            <person name="Maeser P."/>
            <person name="Thomine S."/>
            <person name="Schroeder J.I."/>
            <person name="Ward J.M."/>
            <person name="Hirschi K."/>
            <person name="Sze H."/>
            <person name="Talke I.N."/>
            <person name="Amtmann A."/>
            <person name="Maathuis F.J.M."/>
            <person name="Sanders D."/>
            <person name="Harper J.F."/>
            <person name="Tchieu J."/>
            <person name="Gribskov M."/>
            <person name="Persans M.W."/>
            <person name="Salt D.E."/>
            <person name="Kim S.A."/>
            <person name="Guerinot M.L."/>
        </authorList>
    </citation>
    <scope>GENE FAMILY</scope>
    <scope>NOMENCLATURE</scope>
</reference>
<reference key="9">
    <citation type="journal article" date="2002" name="Plant Physiol.">
        <title>Electrophysiological analysis of cloned cyclic nucleotide-gated ion channels.</title>
        <authorList>
            <person name="Leng Q."/>
            <person name="Mercier R.W."/>
            <person name="Hua B.-G."/>
            <person name="Fromm H."/>
            <person name="Berkowitz G.A."/>
        </authorList>
    </citation>
    <scope>CHARACTERIZATION</scope>
    <scope>FUNCTION</scope>
</reference>
<proteinExistence type="evidence at protein level"/>
<comment type="function">
    <text evidence="4 5">Acts as a cyclic nucleotide-gated ion channel. Can be activated by cyclic AMP which leads to an opening of the cation channel. May be responsible for cAMP-induced calcium entry in cells and thus should be involved in the calcium signal transduction. Could transport K(+), Na(+) and Pb(2+).</text>
</comment>
<comment type="subunit">
    <text evidence="6">Homotetramer or heterotetramer (Potential). Binds calmodulin-2/3/5 with a higher affinity than calmodulin-1/4.</text>
</comment>
<comment type="subcellular location">
    <subcellularLocation>
        <location evidence="6">Cell membrane</location>
        <topology evidence="6">Multi-pass membrane protein</topology>
    </subcellularLocation>
</comment>
<comment type="tissue specificity">
    <text>Expressed in the whole plant but only weakly in roots.</text>
</comment>
<comment type="domain">
    <text evidence="1">The binding of calmodulin to the C-terminus might interfere with cyclic nucleotide binding and thus channel activation.</text>
</comment>
<comment type="disruption phenotype">
    <text evidence="4">Plants exhibit an improved tolerance to Pb(2+).</text>
</comment>
<comment type="similarity">
    <text evidence="6">Belongs to the cyclic nucleotide-gated cation channel (TC 1.A.1.5) family.</text>
</comment>
<accession>O65717</accession>
<name>CNGC1_ARATH</name>
<dbReference type="EMBL" id="Y16327">
    <property type="protein sequence ID" value="CAA76178.1"/>
    <property type="molecule type" value="mRNA"/>
</dbReference>
<dbReference type="EMBL" id="AB025622">
    <property type="protein sequence ID" value="BAB08416.1"/>
    <property type="molecule type" value="Genomic_DNA"/>
</dbReference>
<dbReference type="EMBL" id="CP002688">
    <property type="protein sequence ID" value="AED96311.1"/>
    <property type="molecule type" value="Genomic_DNA"/>
</dbReference>
<dbReference type="EMBL" id="AF370139">
    <property type="protein sequence ID" value="AAK43954.1"/>
    <property type="molecule type" value="mRNA"/>
</dbReference>
<dbReference type="EMBL" id="BT000991">
    <property type="protein sequence ID" value="AAN41391.1"/>
    <property type="molecule type" value="mRNA"/>
</dbReference>
<dbReference type="PIR" id="T51354">
    <property type="entry name" value="T51354"/>
</dbReference>
<dbReference type="RefSeq" id="NP_200125.1">
    <property type="nucleotide sequence ID" value="NM_124692.3"/>
</dbReference>
<dbReference type="PDB" id="9J34">
    <property type="method" value="EM"/>
    <property type="resolution" value="2.51 A"/>
    <property type="chains" value="A/B/C/D=1-716"/>
</dbReference>
<dbReference type="PDBsum" id="9J34"/>
<dbReference type="EMDB" id="EMD-61105"/>
<dbReference type="BioGRID" id="20638">
    <property type="interactions" value="4"/>
</dbReference>
<dbReference type="FunCoup" id="O65717">
    <property type="interactions" value="314"/>
</dbReference>
<dbReference type="IntAct" id="O65717">
    <property type="interactions" value="2"/>
</dbReference>
<dbReference type="STRING" id="3702.O65717"/>
<dbReference type="TCDB" id="1.A.1.5.5">
    <property type="family name" value="the voltage-gated ion channel (vic) superfamily"/>
</dbReference>
<dbReference type="iPTMnet" id="O65717"/>
<dbReference type="PaxDb" id="3702-AT5G53130.1"/>
<dbReference type="ProteomicsDB" id="220294"/>
<dbReference type="EnsemblPlants" id="AT5G53130.1">
    <property type="protein sequence ID" value="AT5G53130.1"/>
    <property type="gene ID" value="AT5G53130"/>
</dbReference>
<dbReference type="GeneID" id="835393"/>
<dbReference type="Gramene" id="AT5G53130.1">
    <property type="protein sequence ID" value="AT5G53130.1"/>
    <property type="gene ID" value="AT5G53130"/>
</dbReference>
<dbReference type="KEGG" id="ath:AT5G53130"/>
<dbReference type="Araport" id="AT5G53130"/>
<dbReference type="TAIR" id="AT5G53130">
    <property type="gene designation" value="CNGC1"/>
</dbReference>
<dbReference type="eggNOG" id="KOG0498">
    <property type="taxonomic scope" value="Eukaryota"/>
</dbReference>
<dbReference type="HOGENOM" id="CLU_013069_3_0_1"/>
<dbReference type="InParanoid" id="O65717"/>
<dbReference type="OMA" id="QDWKSDK"/>
<dbReference type="OrthoDB" id="421226at2759"/>
<dbReference type="PhylomeDB" id="O65717"/>
<dbReference type="PRO" id="PR:O65717"/>
<dbReference type="Proteomes" id="UP000006548">
    <property type="component" value="Chromosome 5"/>
</dbReference>
<dbReference type="ExpressionAtlas" id="O65717">
    <property type="expression patterns" value="baseline and differential"/>
</dbReference>
<dbReference type="GO" id="GO:0005886">
    <property type="term" value="C:plasma membrane"/>
    <property type="evidence" value="ECO:0000314"/>
    <property type="project" value="TAIR"/>
</dbReference>
<dbReference type="GO" id="GO:0005516">
    <property type="term" value="F:calmodulin binding"/>
    <property type="evidence" value="ECO:0007669"/>
    <property type="project" value="UniProtKB-KW"/>
</dbReference>
<dbReference type="GO" id="GO:0030552">
    <property type="term" value="F:cAMP binding"/>
    <property type="evidence" value="ECO:0007669"/>
    <property type="project" value="UniProtKB-KW"/>
</dbReference>
<dbReference type="GO" id="GO:0030553">
    <property type="term" value="F:cGMP binding"/>
    <property type="evidence" value="ECO:0007669"/>
    <property type="project" value="UniProtKB-KW"/>
</dbReference>
<dbReference type="GO" id="GO:0005216">
    <property type="term" value="F:monoatomic ion channel activity"/>
    <property type="evidence" value="ECO:0007669"/>
    <property type="project" value="InterPro"/>
</dbReference>
<dbReference type="CDD" id="cd00038">
    <property type="entry name" value="CAP_ED"/>
    <property type="match status" value="1"/>
</dbReference>
<dbReference type="FunFam" id="1.10.287.630:FF:000003">
    <property type="entry name" value="Cyclic nucleotide-gated ion channel 1"/>
    <property type="match status" value="1"/>
</dbReference>
<dbReference type="FunFam" id="2.60.120.10:FF:000024">
    <property type="entry name" value="Cyclic nucleotide-gated ion channel 1"/>
    <property type="match status" value="1"/>
</dbReference>
<dbReference type="Gene3D" id="1.10.287.70">
    <property type="match status" value="1"/>
</dbReference>
<dbReference type="Gene3D" id="1.10.287.630">
    <property type="entry name" value="Helix hairpin bin"/>
    <property type="match status" value="1"/>
</dbReference>
<dbReference type="Gene3D" id="2.60.120.10">
    <property type="entry name" value="Jelly Rolls"/>
    <property type="match status" value="1"/>
</dbReference>
<dbReference type="InterPro" id="IPR000595">
    <property type="entry name" value="cNMP-bd_dom"/>
</dbReference>
<dbReference type="InterPro" id="IPR018490">
    <property type="entry name" value="cNMP-bd_dom_sf"/>
</dbReference>
<dbReference type="InterPro" id="IPR005821">
    <property type="entry name" value="Ion_trans_dom"/>
</dbReference>
<dbReference type="InterPro" id="IPR014710">
    <property type="entry name" value="RmlC-like_jellyroll"/>
</dbReference>
<dbReference type="PANTHER" id="PTHR45651:SF5">
    <property type="entry name" value="CYCLIC NUCLEOTIDE-GATED ION CHANNEL 1"/>
    <property type="match status" value="1"/>
</dbReference>
<dbReference type="PANTHER" id="PTHR45651">
    <property type="entry name" value="CYCLIC NUCLEOTIDE-GATED ION CHANNEL 15-RELATED-RELATED"/>
    <property type="match status" value="1"/>
</dbReference>
<dbReference type="Pfam" id="PF00027">
    <property type="entry name" value="cNMP_binding"/>
    <property type="match status" value="1"/>
</dbReference>
<dbReference type="Pfam" id="PF00520">
    <property type="entry name" value="Ion_trans"/>
    <property type="match status" value="1"/>
</dbReference>
<dbReference type="SMART" id="SM00100">
    <property type="entry name" value="cNMP"/>
    <property type="match status" value="1"/>
</dbReference>
<dbReference type="SUPFAM" id="SSF51206">
    <property type="entry name" value="cAMP-binding domain-like"/>
    <property type="match status" value="1"/>
</dbReference>
<dbReference type="SUPFAM" id="SSF81324">
    <property type="entry name" value="Voltage-gated potassium channels"/>
    <property type="match status" value="1"/>
</dbReference>
<dbReference type="PROSITE" id="PS50042">
    <property type="entry name" value="CNMP_BINDING_3"/>
    <property type="match status" value="1"/>
</dbReference>
<evidence type="ECO:0000250" key="1"/>
<evidence type="ECO:0000255" key="2"/>
<evidence type="ECO:0000256" key="3">
    <source>
        <dbReference type="SAM" id="MobiDB-lite"/>
    </source>
</evidence>
<evidence type="ECO:0000269" key="4">
    <source>
    </source>
</evidence>
<evidence type="ECO:0000269" key="5">
    <source>
    </source>
</evidence>
<evidence type="ECO:0000305" key="6"/>
<sequence length="716" mass="83097">MNFRQEKFVRFQDWKSDKTSSDVEYSGKNEIQTGIFQRTISSISDKFYRSFESSSARIKLFKRSYKSYSFKEAVSKGIGSTHKILDPQGPFLQRWNKIFVLACIIAVSLDPLFFYVPIIDDAKKCLGIDKKMEITASVLRSFTDVFYVLHIIFQFRTGFIAPSSRVFGRGVLVEDKREIAKRYLSSHFIIDILAVLPLPQMVILIIIPHMRGSSSLNTKNMLKFIVFFQYIPRFIRIYPLYKEVTRTSGILTETAWAGAAFNLFLYMLASHVFGAFWYLFSIERETVCWKQACERNNPPCISKLLYCDPETAGGNAFLNESCPIQTPNTTLFDFGIFLDALQSGVVESQDFPQKFFYCFWWGLQNLSSLGQNLKTSTYIWEICFAVFISIAGLVLFSFLIGNMQTYLQSTTTRLEEMRVKRRDAEQWMSHRLLPENLRKRIRRYEQYKWQETRGVDEENLLSNLPKDLRRDIKRHLCLALLMRVPMFEKMDEQLLDALCDRLQPVLYTEESYIVREGDPVDEMLFIMRGKLLTITTNGGRTGFLNSEYLGAGDFCGEELLTWALDPHSSSNLPISTRTVRALMEVEAFALKADDLKFVASQFRRLHSKQLRHTFRYYSQQWKTWAACFIQAAWRRYIKKKLEESLKEEENRLQDALAKEACGSSPSLGATIYASRFAANILRTIRRSGSVRKPRMPERMPPMLLQKPAEPDFNSDD</sequence>
<gene>
    <name type="primary">CNGC1</name>
    <name type="ordered locus">At5g53130</name>
    <name type="ORF">MFH8.6</name>
</gene>
<keyword id="KW-0002">3D-structure</keyword>
<keyword id="KW-0112">Calmodulin-binding</keyword>
<keyword id="KW-0114">cAMP</keyword>
<keyword id="KW-0116">cAMP-binding</keyword>
<keyword id="KW-1003">Cell membrane</keyword>
<keyword id="KW-0140">cGMP</keyword>
<keyword id="KW-0142">cGMP-binding</keyword>
<keyword id="KW-0407">Ion channel</keyword>
<keyword id="KW-0406">Ion transport</keyword>
<keyword id="KW-1071">Ligand-gated ion channel</keyword>
<keyword id="KW-0472">Membrane</keyword>
<keyword id="KW-0547">Nucleotide-binding</keyword>
<keyword id="KW-1185">Reference proteome</keyword>
<keyword id="KW-0812">Transmembrane</keyword>
<keyword id="KW-1133">Transmembrane helix</keyword>
<keyword id="KW-0813">Transport</keyword>